<dbReference type="EC" id="2.5.1.39" evidence="1"/>
<dbReference type="EMBL" id="CP000653">
    <property type="protein sequence ID" value="ABP58933.1"/>
    <property type="molecule type" value="Genomic_DNA"/>
</dbReference>
<dbReference type="RefSeq" id="WP_011915506.1">
    <property type="nucleotide sequence ID" value="NC_009436.1"/>
</dbReference>
<dbReference type="SMR" id="A4W5F3"/>
<dbReference type="STRING" id="399742.Ent638_0244"/>
<dbReference type="KEGG" id="ent:Ent638_0244"/>
<dbReference type="eggNOG" id="COG0382">
    <property type="taxonomic scope" value="Bacteria"/>
</dbReference>
<dbReference type="HOGENOM" id="CLU_034879_1_0_6"/>
<dbReference type="OrthoDB" id="9782418at2"/>
<dbReference type="UniPathway" id="UPA00232"/>
<dbReference type="Proteomes" id="UP000000230">
    <property type="component" value="Chromosome"/>
</dbReference>
<dbReference type="GO" id="GO:0005886">
    <property type="term" value="C:plasma membrane"/>
    <property type="evidence" value="ECO:0007669"/>
    <property type="project" value="UniProtKB-SubCell"/>
</dbReference>
<dbReference type="GO" id="GO:0008412">
    <property type="term" value="F:4-hydroxybenzoate polyprenyltransferase activity"/>
    <property type="evidence" value="ECO:0007669"/>
    <property type="project" value="UniProtKB-UniRule"/>
</dbReference>
<dbReference type="GO" id="GO:0006744">
    <property type="term" value="P:ubiquinone biosynthetic process"/>
    <property type="evidence" value="ECO:0007669"/>
    <property type="project" value="UniProtKB-UniRule"/>
</dbReference>
<dbReference type="CDD" id="cd13959">
    <property type="entry name" value="PT_UbiA_COQ2"/>
    <property type="match status" value="1"/>
</dbReference>
<dbReference type="FunFam" id="1.10.357.140:FF:000002">
    <property type="entry name" value="4-hydroxybenzoate octaprenyltransferase"/>
    <property type="match status" value="1"/>
</dbReference>
<dbReference type="FunFam" id="1.20.120.1780:FF:000001">
    <property type="entry name" value="4-hydroxybenzoate octaprenyltransferase"/>
    <property type="match status" value="1"/>
</dbReference>
<dbReference type="Gene3D" id="1.10.357.140">
    <property type="entry name" value="UbiA prenyltransferase"/>
    <property type="match status" value="1"/>
</dbReference>
<dbReference type="Gene3D" id="1.20.120.1780">
    <property type="entry name" value="UbiA prenyltransferase"/>
    <property type="match status" value="1"/>
</dbReference>
<dbReference type="HAMAP" id="MF_01635">
    <property type="entry name" value="UbiA"/>
    <property type="match status" value="1"/>
</dbReference>
<dbReference type="InterPro" id="IPR006370">
    <property type="entry name" value="HB_polyprenyltransferase-like"/>
</dbReference>
<dbReference type="InterPro" id="IPR039653">
    <property type="entry name" value="Prenyltransferase"/>
</dbReference>
<dbReference type="InterPro" id="IPR000537">
    <property type="entry name" value="UbiA_prenyltransferase"/>
</dbReference>
<dbReference type="InterPro" id="IPR030470">
    <property type="entry name" value="UbiA_prenylTrfase_CS"/>
</dbReference>
<dbReference type="InterPro" id="IPR044878">
    <property type="entry name" value="UbiA_sf"/>
</dbReference>
<dbReference type="NCBIfam" id="TIGR01474">
    <property type="entry name" value="ubiA_proteo"/>
    <property type="match status" value="1"/>
</dbReference>
<dbReference type="PANTHER" id="PTHR11048:SF28">
    <property type="entry name" value="4-HYDROXYBENZOATE POLYPRENYLTRANSFERASE, MITOCHONDRIAL"/>
    <property type="match status" value="1"/>
</dbReference>
<dbReference type="PANTHER" id="PTHR11048">
    <property type="entry name" value="PRENYLTRANSFERASES"/>
    <property type="match status" value="1"/>
</dbReference>
<dbReference type="Pfam" id="PF01040">
    <property type="entry name" value="UbiA"/>
    <property type="match status" value="1"/>
</dbReference>
<dbReference type="PROSITE" id="PS00943">
    <property type="entry name" value="UBIA"/>
    <property type="match status" value="1"/>
</dbReference>
<keyword id="KW-0997">Cell inner membrane</keyword>
<keyword id="KW-1003">Cell membrane</keyword>
<keyword id="KW-0460">Magnesium</keyword>
<keyword id="KW-0472">Membrane</keyword>
<keyword id="KW-0808">Transferase</keyword>
<keyword id="KW-0812">Transmembrane</keyword>
<keyword id="KW-1133">Transmembrane helix</keyword>
<keyword id="KW-0831">Ubiquinone biosynthesis</keyword>
<evidence type="ECO:0000255" key="1">
    <source>
        <dbReference type="HAMAP-Rule" id="MF_01635"/>
    </source>
</evidence>
<comment type="function">
    <text evidence="1">Catalyzes the prenylation of para-hydroxybenzoate (PHB) with an all-trans polyprenyl group. Mediates the second step in the final reaction sequence of ubiquinone-8 (UQ-8) biosynthesis, which is the condensation of the polyisoprenoid side chain with PHB, generating the first membrane-bound Q intermediate 3-octaprenyl-4-hydroxybenzoate.</text>
</comment>
<comment type="catalytic activity">
    <reaction evidence="1">
        <text>all-trans-octaprenyl diphosphate + 4-hydroxybenzoate = 4-hydroxy-3-(all-trans-octaprenyl)benzoate + diphosphate</text>
        <dbReference type="Rhea" id="RHEA:27782"/>
        <dbReference type="ChEBI" id="CHEBI:1617"/>
        <dbReference type="ChEBI" id="CHEBI:17879"/>
        <dbReference type="ChEBI" id="CHEBI:33019"/>
        <dbReference type="ChEBI" id="CHEBI:57711"/>
        <dbReference type="EC" id="2.5.1.39"/>
    </reaction>
</comment>
<comment type="cofactor">
    <cofactor evidence="1">
        <name>Mg(2+)</name>
        <dbReference type="ChEBI" id="CHEBI:18420"/>
    </cofactor>
</comment>
<comment type="pathway">
    <text evidence="1">Cofactor biosynthesis; ubiquinone biosynthesis.</text>
</comment>
<comment type="subcellular location">
    <subcellularLocation>
        <location evidence="1">Cell inner membrane</location>
        <topology evidence="1">Multi-pass membrane protein</topology>
    </subcellularLocation>
</comment>
<comment type="similarity">
    <text evidence="1">Belongs to the UbiA prenyltransferase family.</text>
</comment>
<sequence length="289" mass="32506">MEWSLTQDKLLAFHRLMRTDKPIGALLLLWPTLWALWVAAPGLPPLWILAVFVAGVWLMRAAGCVVNDYADRKFDGHVKRTANRPLPSGQVSEKEARTLFVVLVVLAFLLVLTLNTMTILLSVAALALAWVYPFMKRYTHLPQVVLGAAFGWSIPMAFAAVSESVPLSCWLMFLANILWAVAYDTQYAMVDRDDDLKIGIKSTAILFGRHDKLIIGILQVAVLALMVVIGRLNGLNWEFYWSVLVAGLLFAYQQKLIVRRDREACFKAFLNNNYVGLVLFLGLAMSYWS</sequence>
<name>UBIA_ENT38</name>
<gene>
    <name evidence="1" type="primary">ubiA</name>
    <name type="ordered locus">Ent638_0244</name>
</gene>
<proteinExistence type="inferred from homology"/>
<feature type="chain" id="PRO_1000069818" description="4-hydroxybenzoate octaprenyltransferase">
    <location>
        <begin position="1"/>
        <end position="289"/>
    </location>
</feature>
<feature type="transmembrane region" description="Helical" evidence="1">
    <location>
        <begin position="33"/>
        <end position="53"/>
    </location>
</feature>
<feature type="transmembrane region" description="Helical" evidence="1">
    <location>
        <begin position="99"/>
        <end position="119"/>
    </location>
</feature>
<feature type="transmembrane region" description="Helical" evidence="1">
    <location>
        <begin position="141"/>
        <end position="161"/>
    </location>
</feature>
<feature type="transmembrane region" description="Helical" evidence="1">
    <location>
        <begin position="163"/>
        <end position="183"/>
    </location>
</feature>
<feature type="transmembrane region" description="Helical" evidence="1">
    <location>
        <begin position="213"/>
        <end position="233"/>
    </location>
</feature>
<feature type="transmembrane region" description="Helical" evidence="1">
    <location>
        <begin position="238"/>
        <end position="258"/>
    </location>
</feature>
<feature type="transmembrane region" description="Helical" evidence="1">
    <location>
        <begin position="268"/>
        <end position="288"/>
    </location>
</feature>
<organism>
    <name type="scientific">Enterobacter sp. (strain 638)</name>
    <dbReference type="NCBI Taxonomy" id="399742"/>
    <lineage>
        <taxon>Bacteria</taxon>
        <taxon>Pseudomonadati</taxon>
        <taxon>Pseudomonadota</taxon>
        <taxon>Gammaproteobacteria</taxon>
        <taxon>Enterobacterales</taxon>
        <taxon>Enterobacteriaceae</taxon>
        <taxon>Enterobacter</taxon>
    </lineage>
</organism>
<reference key="1">
    <citation type="journal article" date="2010" name="PLoS Genet.">
        <title>Genome sequence of the plant growth promoting endophytic bacterium Enterobacter sp. 638.</title>
        <authorList>
            <person name="Taghavi S."/>
            <person name="van der Lelie D."/>
            <person name="Hoffman A."/>
            <person name="Zhang Y.B."/>
            <person name="Walla M.D."/>
            <person name="Vangronsveld J."/>
            <person name="Newman L."/>
            <person name="Monchy S."/>
        </authorList>
    </citation>
    <scope>NUCLEOTIDE SEQUENCE [LARGE SCALE GENOMIC DNA]</scope>
    <source>
        <strain>638</strain>
    </source>
</reference>
<accession>A4W5F3</accession>
<protein>
    <recommendedName>
        <fullName evidence="1">4-hydroxybenzoate octaprenyltransferase</fullName>
        <ecNumber evidence="1">2.5.1.39</ecNumber>
    </recommendedName>
    <alternativeName>
        <fullName evidence="1">4-HB polyprenyltransferase</fullName>
    </alternativeName>
</protein>